<sequence length="103" mass="11324">MQKIRKGDKVVVLTGKDKGRTGEVIQVMPKEDRALVRGVNVVKRHQRQTQNQEAGIITKEASIHLSNIAIADPKDGKPTRVGFKIDGDKKVRVAKRSGDVIDG</sequence>
<keyword id="KW-1185">Reference proteome</keyword>
<keyword id="KW-0687">Ribonucleoprotein</keyword>
<keyword id="KW-0689">Ribosomal protein</keyword>
<keyword id="KW-0694">RNA-binding</keyword>
<keyword id="KW-0699">rRNA-binding</keyword>
<evidence type="ECO:0000255" key="1">
    <source>
        <dbReference type="HAMAP-Rule" id="MF_01326"/>
    </source>
</evidence>
<evidence type="ECO:0000305" key="2"/>
<dbReference type="EMBL" id="AL591688">
    <property type="protein sequence ID" value="CAC45946.1"/>
    <property type="molecule type" value="Genomic_DNA"/>
</dbReference>
<dbReference type="RefSeq" id="NP_385473.1">
    <property type="nucleotide sequence ID" value="NC_003047.1"/>
</dbReference>
<dbReference type="RefSeq" id="WP_003536524.1">
    <property type="nucleotide sequence ID" value="NC_003047.1"/>
</dbReference>
<dbReference type="SMR" id="Q92QF9"/>
<dbReference type="EnsemblBacteria" id="CAC45946">
    <property type="protein sequence ID" value="CAC45946"/>
    <property type="gene ID" value="SMc01298"/>
</dbReference>
<dbReference type="GeneID" id="89575691"/>
<dbReference type="KEGG" id="sme:SMc01298"/>
<dbReference type="PATRIC" id="fig|266834.11.peg.2783"/>
<dbReference type="eggNOG" id="COG0198">
    <property type="taxonomic scope" value="Bacteria"/>
</dbReference>
<dbReference type="HOGENOM" id="CLU_093315_2_2_5"/>
<dbReference type="OrthoDB" id="9807419at2"/>
<dbReference type="Proteomes" id="UP000001976">
    <property type="component" value="Chromosome"/>
</dbReference>
<dbReference type="GO" id="GO:1990904">
    <property type="term" value="C:ribonucleoprotein complex"/>
    <property type="evidence" value="ECO:0007669"/>
    <property type="project" value="UniProtKB-KW"/>
</dbReference>
<dbReference type="GO" id="GO:0005840">
    <property type="term" value="C:ribosome"/>
    <property type="evidence" value="ECO:0007669"/>
    <property type="project" value="UniProtKB-KW"/>
</dbReference>
<dbReference type="GO" id="GO:0019843">
    <property type="term" value="F:rRNA binding"/>
    <property type="evidence" value="ECO:0007669"/>
    <property type="project" value="UniProtKB-UniRule"/>
</dbReference>
<dbReference type="GO" id="GO:0003735">
    <property type="term" value="F:structural constituent of ribosome"/>
    <property type="evidence" value="ECO:0007669"/>
    <property type="project" value="InterPro"/>
</dbReference>
<dbReference type="GO" id="GO:0006412">
    <property type="term" value="P:translation"/>
    <property type="evidence" value="ECO:0007669"/>
    <property type="project" value="UniProtKB-UniRule"/>
</dbReference>
<dbReference type="CDD" id="cd06089">
    <property type="entry name" value="KOW_RPL26"/>
    <property type="match status" value="1"/>
</dbReference>
<dbReference type="FunFam" id="2.30.30.30:FF:000004">
    <property type="entry name" value="50S ribosomal protein L24"/>
    <property type="match status" value="1"/>
</dbReference>
<dbReference type="Gene3D" id="2.30.30.30">
    <property type="match status" value="1"/>
</dbReference>
<dbReference type="HAMAP" id="MF_01326_B">
    <property type="entry name" value="Ribosomal_uL24_B"/>
    <property type="match status" value="1"/>
</dbReference>
<dbReference type="InterPro" id="IPR005824">
    <property type="entry name" value="KOW"/>
</dbReference>
<dbReference type="InterPro" id="IPR014722">
    <property type="entry name" value="Rib_uL2_dom2"/>
</dbReference>
<dbReference type="InterPro" id="IPR003256">
    <property type="entry name" value="Ribosomal_uL24"/>
</dbReference>
<dbReference type="InterPro" id="IPR005825">
    <property type="entry name" value="Ribosomal_uL24_CS"/>
</dbReference>
<dbReference type="InterPro" id="IPR041988">
    <property type="entry name" value="Ribosomal_uL24_KOW"/>
</dbReference>
<dbReference type="InterPro" id="IPR008991">
    <property type="entry name" value="Translation_prot_SH3-like_sf"/>
</dbReference>
<dbReference type="NCBIfam" id="TIGR01079">
    <property type="entry name" value="rplX_bact"/>
    <property type="match status" value="1"/>
</dbReference>
<dbReference type="PANTHER" id="PTHR12903">
    <property type="entry name" value="MITOCHONDRIAL RIBOSOMAL PROTEIN L24"/>
    <property type="match status" value="1"/>
</dbReference>
<dbReference type="Pfam" id="PF00467">
    <property type="entry name" value="KOW"/>
    <property type="match status" value="1"/>
</dbReference>
<dbReference type="Pfam" id="PF17136">
    <property type="entry name" value="ribosomal_L24"/>
    <property type="match status" value="1"/>
</dbReference>
<dbReference type="SMART" id="SM00739">
    <property type="entry name" value="KOW"/>
    <property type="match status" value="1"/>
</dbReference>
<dbReference type="SUPFAM" id="SSF50104">
    <property type="entry name" value="Translation proteins SH3-like domain"/>
    <property type="match status" value="1"/>
</dbReference>
<dbReference type="PROSITE" id="PS01108">
    <property type="entry name" value="RIBOSOMAL_L24"/>
    <property type="match status" value="1"/>
</dbReference>
<reference key="1">
    <citation type="journal article" date="2001" name="Proc. Natl. Acad. Sci. U.S.A.">
        <title>Analysis of the chromosome sequence of the legume symbiont Sinorhizobium meliloti strain 1021.</title>
        <authorList>
            <person name="Capela D."/>
            <person name="Barloy-Hubler F."/>
            <person name="Gouzy J."/>
            <person name="Bothe G."/>
            <person name="Ampe F."/>
            <person name="Batut J."/>
            <person name="Boistard P."/>
            <person name="Becker A."/>
            <person name="Boutry M."/>
            <person name="Cadieu E."/>
            <person name="Dreano S."/>
            <person name="Gloux S."/>
            <person name="Godrie T."/>
            <person name="Goffeau A."/>
            <person name="Kahn D."/>
            <person name="Kiss E."/>
            <person name="Lelaure V."/>
            <person name="Masuy D."/>
            <person name="Pohl T."/>
            <person name="Portetelle D."/>
            <person name="Puehler A."/>
            <person name="Purnelle B."/>
            <person name="Ramsperger U."/>
            <person name="Renard C."/>
            <person name="Thebault P."/>
            <person name="Vandenbol M."/>
            <person name="Weidner S."/>
            <person name="Galibert F."/>
        </authorList>
    </citation>
    <scope>NUCLEOTIDE SEQUENCE [LARGE SCALE GENOMIC DNA]</scope>
    <source>
        <strain>1021</strain>
    </source>
</reference>
<reference key="2">
    <citation type="journal article" date="2001" name="Science">
        <title>The composite genome of the legume symbiont Sinorhizobium meliloti.</title>
        <authorList>
            <person name="Galibert F."/>
            <person name="Finan T.M."/>
            <person name="Long S.R."/>
            <person name="Puehler A."/>
            <person name="Abola P."/>
            <person name="Ampe F."/>
            <person name="Barloy-Hubler F."/>
            <person name="Barnett M.J."/>
            <person name="Becker A."/>
            <person name="Boistard P."/>
            <person name="Bothe G."/>
            <person name="Boutry M."/>
            <person name="Bowser L."/>
            <person name="Buhrmester J."/>
            <person name="Cadieu E."/>
            <person name="Capela D."/>
            <person name="Chain P."/>
            <person name="Cowie A."/>
            <person name="Davis R.W."/>
            <person name="Dreano S."/>
            <person name="Federspiel N.A."/>
            <person name="Fisher R.F."/>
            <person name="Gloux S."/>
            <person name="Godrie T."/>
            <person name="Goffeau A."/>
            <person name="Golding B."/>
            <person name="Gouzy J."/>
            <person name="Gurjal M."/>
            <person name="Hernandez-Lucas I."/>
            <person name="Hong A."/>
            <person name="Huizar L."/>
            <person name="Hyman R.W."/>
            <person name="Jones T."/>
            <person name="Kahn D."/>
            <person name="Kahn M.L."/>
            <person name="Kalman S."/>
            <person name="Keating D.H."/>
            <person name="Kiss E."/>
            <person name="Komp C."/>
            <person name="Lelaure V."/>
            <person name="Masuy D."/>
            <person name="Palm C."/>
            <person name="Peck M.C."/>
            <person name="Pohl T.M."/>
            <person name="Portetelle D."/>
            <person name="Purnelle B."/>
            <person name="Ramsperger U."/>
            <person name="Surzycki R."/>
            <person name="Thebault P."/>
            <person name="Vandenbol M."/>
            <person name="Vorhoelter F.J."/>
            <person name="Weidner S."/>
            <person name="Wells D.H."/>
            <person name="Wong K."/>
            <person name="Yeh K.-C."/>
            <person name="Batut J."/>
        </authorList>
    </citation>
    <scope>NUCLEOTIDE SEQUENCE [LARGE SCALE GENOMIC DNA]</scope>
    <source>
        <strain>1021</strain>
    </source>
</reference>
<name>RL24_RHIME</name>
<accession>Q92QF9</accession>
<protein>
    <recommendedName>
        <fullName evidence="1">Large ribosomal subunit protein uL24</fullName>
    </recommendedName>
    <alternativeName>
        <fullName evidence="2">50S ribosomal protein L24</fullName>
    </alternativeName>
</protein>
<feature type="chain" id="PRO_0000130702" description="Large ribosomal subunit protein uL24">
    <location>
        <begin position="1"/>
        <end position="103"/>
    </location>
</feature>
<proteinExistence type="inferred from homology"/>
<organism>
    <name type="scientific">Rhizobium meliloti (strain 1021)</name>
    <name type="common">Ensifer meliloti</name>
    <name type="synonym">Sinorhizobium meliloti</name>
    <dbReference type="NCBI Taxonomy" id="266834"/>
    <lineage>
        <taxon>Bacteria</taxon>
        <taxon>Pseudomonadati</taxon>
        <taxon>Pseudomonadota</taxon>
        <taxon>Alphaproteobacteria</taxon>
        <taxon>Hyphomicrobiales</taxon>
        <taxon>Rhizobiaceae</taxon>
        <taxon>Sinorhizobium/Ensifer group</taxon>
        <taxon>Sinorhizobium</taxon>
    </lineage>
</organism>
<gene>
    <name evidence="1" type="primary">rplX</name>
    <name type="ordered locus">R01367</name>
    <name type="ORF">SMc01298</name>
</gene>
<comment type="function">
    <text evidence="1">One of two assembly initiator proteins, it binds directly to the 5'-end of the 23S rRNA, where it nucleates assembly of the 50S subunit.</text>
</comment>
<comment type="function">
    <text evidence="1">One of the proteins that surrounds the polypeptide exit tunnel on the outside of the subunit.</text>
</comment>
<comment type="subunit">
    <text evidence="1">Part of the 50S ribosomal subunit.</text>
</comment>
<comment type="similarity">
    <text evidence="1">Belongs to the universal ribosomal protein uL24 family.</text>
</comment>